<gene>
    <name evidence="2" type="primary">petD</name>
    <name type="ordered locus">PS156</name>
</gene>
<keyword id="KW-0150">Chloroplast</keyword>
<keyword id="KW-0249">Electron transport</keyword>
<keyword id="KW-0472">Membrane</keyword>
<keyword id="KW-0602">Photosynthesis</keyword>
<keyword id="KW-0934">Plastid</keyword>
<keyword id="KW-0793">Thylakoid</keyword>
<keyword id="KW-0812">Transmembrane</keyword>
<keyword id="KW-1133">Transmembrane helix</keyword>
<keyword id="KW-0813">Transport</keyword>
<sequence>MGVTKKPDLNDPVLRAKLAKGMGHNYYGEPAWPNDLLYIFPVVILGTIACNVGLAVLEPSMIGEPADPFATPLEILPEWYFFPVFQILRTVPNKLLGVLLMVSVPTGLLTVPFLENVNKFQNPFRRPVATTVFLIGTAVALWLGIGATLPIDKSLTLGLF</sequence>
<reference key="1">
    <citation type="journal article" date="2004" name="Curr. Genet.">
        <title>Structural features and transcript-editing analysis of sugarcane (Saccharum officinarum L.) chloroplast genome.</title>
        <authorList>
            <person name="Calsa T. Jr."/>
            <person name="Carraro D.M."/>
            <person name="Benatti M.R."/>
            <person name="Barbosa A.C."/>
            <person name="Kitajima J.P."/>
            <person name="Carrer H."/>
        </authorList>
    </citation>
    <scope>NUCLEOTIDE SEQUENCE [LARGE SCALE GENOMIC DNA]</scope>
    <source>
        <strain>cv. SP-80-3280</strain>
    </source>
</reference>
<geneLocation type="chloroplast"/>
<dbReference type="EMBL" id="AE009947">
    <property type="protein sequence ID" value="AAT44722.1"/>
    <property type="molecule type" value="Genomic_DNA"/>
</dbReference>
<dbReference type="SMR" id="Q6L371"/>
<dbReference type="GO" id="GO:0009535">
    <property type="term" value="C:chloroplast thylakoid membrane"/>
    <property type="evidence" value="ECO:0007669"/>
    <property type="project" value="UniProtKB-SubCell"/>
</dbReference>
<dbReference type="GO" id="GO:0045158">
    <property type="term" value="F:electron transporter, transferring electrons within cytochrome b6/f complex of photosystem II activity"/>
    <property type="evidence" value="ECO:0007669"/>
    <property type="project" value="UniProtKB-UniRule"/>
</dbReference>
<dbReference type="GO" id="GO:0045156">
    <property type="term" value="F:electron transporter, transferring electrons within the cyclic electron transport pathway of photosynthesis activity"/>
    <property type="evidence" value="ECO:0007669"/>
    <property type="project" value="InterPro"/>
</dbReference>
<dbReference type="GO" id="GO:0016491">
    <property type="term" value="F:oxidoreductase activity"/>
    <property type="evidence" value="ECO:0007669"/>
    <property type="project" value="InterPro"/>
</dbReference>
<dbReference type="GO" id="GO:0009767">
    <property type="term" value="P:photosynthetic electron transport chain"/>
    <property type="evidence" value="ECO:0007669"/>
    <property type="project" value="InterPro"/>
</dbReference>
<dbReference type="CDD" id="cd00290">
    <property type="entry name" value="cytochrome_b_C"/>
    <property type="match status" value="1"/>
</dbReference>
<dbReference type="FunFam" id="1.10.287.980:FF:000001">
    <property type="entry name" value="Cytochrome b6-f complex subunit 4"/>
    <property type="match status" value="1"/>
</dbReference>
<dbReference type="FunFam" id="1.20.5.510:FF:000002">
    <property type="entry name" value="Cytochrome b6-f complex subunit 4"/>
    <property type="match status" value="1"/>
</dbReference>
<dbReference type="Gene3D" id="1.10.287.980">
    <property type="entry name" value="plastocyanin oxidoreductase"/>
    <property type="match status" value="1"/>
</dbReference>
<dbReference type="Gene3D" id="1.20.5.510">
    <property type="entry name" value="Single helix bin"/>
    <property type="match status" value="1"/>
</dbReference>
<dbReference type="HAMAP" id="MF_01344">
    <property type="entry name" value="Cytb6_f_subIV"/>
    <property type="match status" value="1"/>
</dbReference>
<dbReference type="InterPro" id="IPR005798">
    <property type="entry name" value="Cyt_b/b6_C"/>
</dbReference>
<dbReference type="InterPro" id="IPR036150">
    <property type="entry name" value="Cyt_b/b6_C_sf"/>
</dbReference>
<dbReference type="InterPro" id="IPR005870">
    <property type="entry name" value="Cyt_b6/f_cplx_suIV"/>
</dbReference>
<dbReference type="InterPro" id="IPR048260">
    <property type="entry name" value="Cytochrome_b_C_euk/bac"/>
</dbReference>
<dbReference type="NCBIfam" id="TIGR01156">
    <property type="entry name" value="cytb6_f_IV"/>
    <property type="match status" value="1"/>
</dbReference>
<dbReference type="PANTHER" id="PTHR19271">
    <property type="entry name" value="CYTOCHROME B"/>
    <property type="match status" value="1"/>
</dbReference>
<dbReference type="PANTHER" id="PTHR19271:SF40">
    <property type="entry name" value="CYTOCHROME B"/>
    <property type="match status" value="1"/>
</dbReference>
<dbReference type="Pfam" id="PF00032">
    <property type="entry name" value="Cytochrom_B_C"/>
    <property type="match status" value="1"/>
</dbReference>
<dbReference type="PIRSF" id="PIRSF000033">
    <property type="entry name" value="B6f_17K"/>
    <property type="match status" value="1"/>
</dbReference>
<dbReference type="SUPFAM" id="SSF81648">
    <property type="entry name" value="a domain/subunit of cytochrome bc1 complex (Ubiquinol-cytochrome c reductase)"/>
    <property type="match status" value="1"/>
</dbReference>
<dbReference type="PROSITE" id="PS51003">
    <property type="entry name" value="CYTB_CTER"/>
    <property type="match status" value="1"/>
</dbReference>
<name>PETD_SACHY</name>
<protein>
    <recommendedName>
        <fullName evidence="2">Cytochrome b6-f complex subunit 4</fullName>
    </recommendedName>
    <alternativeName>
        <fullName evidence="2">17 kDa polypeptide</fullName>
    </alternativeName>
</protein>
<feature type="chain" id="PRO_0000061889" description="Cytochrome b6-f complex subunit 4">
    <location>
        <begin position="1"/>
        <end position="160"/>
    </location>
</feature>
<feature type="transmembrane region" description="Helical" evidence="2">
    <location>
        <begin position="36"/>
        <end position="56"/>
    </location>
</feature>
<feature type="transmembrane region" description="Helical" evidence="2">
    <location>
        <begin position="95"/>
        <end position="115"/>
    </location>
</feature>
<feature type="transmembrane region" description="Helical" evidence="2">
    <location>
        <begin position="131"/>
        <end position="151"/>
    </location>
</feature>
<organism>
    <name type="scientific">Saccharum hybrid</name>
    <name type="common">Sugarcane</name>
    <dbReference type="NCBI Taxonomy" id="15819"/>
    <lineage>
        <taxon>Eukaryota</taxon>
        <taxon>Viridiplantae</taxon>
        <taxon>Streptophyta</taxon>
        <taxon>Embryophyta</taxon>
        <taxon>Tracheophyta</taxon>
        <taxon>Spermatophyta</taxon>
        <taxon>Magnoliopsida</taxon>
        <taxon>Liliopsida</taxon>
        <taxon>Poales</taxon>
        <taxon>Poaceae</taxon>
        <taxon>PACMAD clade</taxon>
        <taxon>Panicoideae</taxon>
        <taxon>Andropogonodae</taxon>
        <taxon>Andropogoneae</taxon>
        <taxon>Saccharinae</taxon>
        <taxon>Saccharum</taxon>
    </lineage>
</organism>
<comment type="function">
    <text evidence="2">Component of the cytochrome b6-f complex, which mediates electron transfer between photosystem II (PSII) and photosystem I (PSI), cyclic electron flow around PSI, and state transitions.</text>
</comment>
<comment type="subunit">
    <text evidence="1">The 4 large subunits of the cytochrome b6-f complex are cytochrome b6, subunit IV (17 kDa polypeptide, petD), cytochrome f and the Rieske protein, while the 4 small subunits are petG, petL, petM and petN. The complex functions as a dimer (By similarity).</text>
</comment>
<comment type="subcellular location">
    <subcellularLocation>
        <location evidence="2">Plastid</location>
        <location evidence="2">Chloroplast thylakoid membrane</location>
        <topology evidence="2">Multi-pass membrane protein</topology>
    </subcellularLocation>
</comment>
<comment type="similarity">
    <text evidence="2">Belongs to the cytochrome b family. PetD subfamily.</text>
</comment>
<evidence type="ECO:0000250" key="1"/>
<evidence type="ECO:0000255" key="2">
    <source>
        <dbReference type="HAMAP-Rule" id="MF_01344"/>
    </source>
</evidence>
<accession>Q6L371</accession>
<proteinExistence type="inferred from homology"/>